<accession>Q7MIH2</accession>
<name>LPXB_VIBVY</name>
<comment type="function">
    <text evidence="1">Condensation of UDP-2,3-diacylglucosamine and 2,3-diacylglucosamine-1-phosphate to form lipid A disaccharide, a precursor of lipid A, a phosphorylated glycolipid that anchors the lipopolysaccharide to the outer membrane of the cell.</text>
</comment>
<comment type="catalytic activity">
    <reaction evidence="1">
        <text>a lipid X + a UDP-2-N,3-O-bis[(3R)-3-hydroxyacyl]-alpha-D-glucosamine = a lipid A disaccharide + UDP + H(+)</text>
        <dbReference type="Rhea" id="RHEA:67828"/>
        <dbReference type="ChEBI" id="CHEBI:15378"/>
        <dbReference type="ChEBI" id="CHEBI:58223"/>
        <dbReference type="ChEBI" id="CHEBI:137748"/>
        <dbReference type="ChEBI" id="CHEBI:176338"/>
        <dbReference type="ChEBI" id="CHEBI:176343"/>
        <dbReference type="EC" id="2.4.1.182"/>
    </reaction>
</comment>
<comment type="pathway">
    <text evidence="1">Bacterial outer membrane biogenesis; LPS lipid A biosynthesis.</text>
</comment>
<comment type="similarity">
    <text evidence="1">Belongs to the LpxB family.</text>
</comment>
<feature type="chain" id="PRO_0000190191" description="Lipid-A-disaccharide synthase">
    <location>
        <begin position="1"/>
        <end position="380"/>
    </location>
</feature>
<evidence type="ECO:0000255" key="1">
    <source>
        <dbReference type="HAMAP-Rule" id="MF_00392"/>
    </source>
</evidence>
<gene>
    <name evidence="1" type="primary">lpxB</name>
    <name type="ordered locus">VV2544</name>
</gene>
<keyword id="KW-0328">Glycosyltransferase</keyword>
<keyword id="KW-0441">Lipid A biosynthesis</keyword>
<keyword id="KW-0444">Lipid biosynthesis</keyword>
<keyword id="KW-0443">Lipid metabolism</keyword>
<keyword id="KW-0808">Transferase</keyword>
<reference key="1">
    <citation type="journal article" date="2003" name="Genome Res.">
        <title>Comparative genome analysis of Vibrio vulnificus, a marine pathogen.</title>
        <authorList>
            <person name="Chen C.-Y."/>
            <person name="Wu K.-M."/>
            <person name="Chang Y.-C."/>
            <person name="Chang C.-H."/>
            <person name="Tsai H.-C."/>
            <person name="Liao T.-L."/>
            <person name="Liu Y.-M."/>
            <person name="Chen H.-J."/>
            <person name="Shen A.B.-T."/>
            <person name="Li J.-C."/>
            <person name="Su T.-L."/>
            <person name="Shao C.-P."/>
            <person name="Lee C.-T."/>
            <person name="Hor L.-I."/>
            <person name="Tsai S.-F."/>
        </authorList>
    </citation>
    <scope>NUCLEOTIDE SEQUENCE [LARGE SCALE GENOMIC DNA]</scope>
    <source>
        <strain>YJ016</strain>
    </source>
</reference>
<sequence length="380" mass="42610">MSNKPLRIGIVAGELSGDTLGEGFIKAIKAVHPDAEFVGIGGPKMIALGCQSLFDMEELAVMGLVEVLGRLPRLLKVKAELVRYFTENPPDVFVGIDAPDFNLRLELDLKNAGIKTVHYVSPSVWAWRQKRIFKIAKATHLVLAFLPFEKAFYDKFNVPCEFIGHTLADAIPLESDKAPARELLGLEQDKQWLAVLPGSRGSELKMLSQPFIETCKKLQQAFPELGFVVALVNQKRREQFEQAWKEYAPELDFKLVDDTARNVITASDAVMLASGTVALECMLLKRPMVVGYRVNAVTAFLAKRLLKTQYVSLPNILADTELVKEYLQDDCTPDNLFGEVSRLLEGDNHQMLDKFTEMHHWIRKDADQQAANAVLKLIEK</sequence>
<dbReference type="EC" id="2.4.1.182" evidence="1"/>
<dbReference type="EMBL" id="BA000037">
    <property type="protein sequence ID" value="BAC95308.1"/>
    <property type="molecule type" value="Genomic_DNA"/>
</dbReference>
<dbReference type="RefSeq" id="WP_011079775.1">
    <property type="nucleotide sequence ID" value="NC_005139.1"/>
</dbReference>
<dbReference type="SMR" id="Q7MIH2"/>
<dbReference type="STRING" id="672.VV93_v1c22630"/>
<dbReference type="CAZy" id="GT19">
    <property type="family name" value="Glycosyltransferase Family 19"/>
</dbReference>
<dbReference type="KEGG" id="vvy:VV2544"/>
<dbReference type="eggNOG" id="COG0763">
    <property type="taxonomic scope" value="Bacteria"/>
</dbReference>
<dbReference type="HOGENOM" id="CLU_036577_3_0_6"/>
<dbReference type="UniPathway" id="UPA00973"/>
<dbReference type="Proteomes" id="UP000002675">
    <property type="component" value="Chromosome I"/>
</dbReference>
<dbReference type="GO" id="GO:0016020">
    <property type="term" value="C:membrane"/>
    <property type="evidence" value="ECO:0007669"/>
    <property type="project" value="GOC"/>
</dbReference>
<dbReference type="GO" id="GO:0008915">
    <property type="term" value="F:lipid-A-disaccharide synthase activity"/>
    <property type="evidence" value="ECO:0007669"/>
    <property type="project" value="UniProtKB-UniRule"/>
</dbReference>
<dbReference type="GO" id="GO:0005543">
    <property type="term" value="F:phospholipid binding"/>
    <property type="evidence" value="ECO:0007669"/>
    <property type="project" value="TreeGrafter"/>
</dbReference>
<dbReference type="GO" id="GO:0009245">
    <property type="term" value="P:lipid A biosynthetic process"/>
    <property type="evidence" value="ECO:0007669"/>
    <property type="project" value="UniProtKB-UniRule"/>
</dbReference>
<dbReference type="HAMAP" id="MF_00392">
    <property type="entry name" value="LpxB"/>
    <property type="match status" value="1"/>
</dbReference>
<dbReference type="InterPro" id="IPR003835">
    <property type="entry name" value="Glyco_trans_19"/>
</dbReference>
<dbReference type="NCBIfam" id="TIGR00215">
    <property type="entry name" value="lpxB"/>
    <property type="match status" value="1"/>
</dbReference>
<dbReference type="PANTHER" id="PTHR30372">
    <property type="entry name" value="LIPID-A-DISACCHARIDE SYNTHASE"/>
    <property type="match status" value="1"/>
</dbReference>
<dbReference type="PANTHER" id="PTHR30372:SF4">
    <property type="entry name" value="LIPID-A-DISACCHARIDE SYNTHASE, MITOCHONDRIAL-RELATED"/>
    <property type="match status" value="1"/>
</dbReference>
<dbReference type="Pfam" id="PF02684">
    <property type="entry name" value="LpxB"/>
    <property type="match status" value="1"/>
</dbReference>
<dbReference type="SUPFAM" id="SSF53756">
    <property type="entry name" value="UDP-Glycosyltransferase/glycogen phosphorylase"/>
    <property type="match status" value="1"/>
</dbReference>
<proteinExistence type="inferred from homology"/>
<protein>
    <recommendedName>
        <fullName evidence="1">Lipid-A-disaccharide synthase</fullName>
        <ecNumber evidence="1">2.4.1.182</ecNumber>
    </recommendedName>
</protein>
<organism>
    <name type="scientific">Vibrio vulnificus (strain YJ016)</name>
    <dbReference type="NCBI Taxonomy" id="196600"/>
    <lineage>
        <taxon>Bacteria</taxon>
        <taxon>Pseudomonadati</taxon>
        <taxon>Pseudomonadota</taxon>
        <taxon>Gammaproteobacteria</taxon>
        <taxon>Vibrionales</taxon>
        <taxon>Vibrionaceae</taxon>
        <taxon>Vibrio</taxon>
    </lineage>
</organism>